<protein>
    <recommendedName>
        <fullName evidence="1">Nuclear export protein</fullName>
        <shortName evidence="1">NEP</shortName>
    </recommendedName>
    <alternativeName>
        <fullName evidence="1">Non-structural protein 2</fullName>
        <shortName evidence="1">NS2</shortName>
    </alternativeName>
</protein>
<reference key="1">
    <citation type="journal article" date="1984" name="J. Virol.">
        <title>Analysis of an influenza A virus mutant with a deletion in the NS segment.</title>
        <authorList>
            <person name="Buonagurio D.A."/>
            <person name="Krystal M."/>
            <person name="Palese P."/>
            <person name="Deborde D.C."/>
            <person name="Maassab H.F."/>
        </authorList>
    </citation>
    <scope>NUCLEOTIDE SEQUENCE [GENOMIC RNA]</scope>
</reference>
<comment type="function">
    <text evidence="1">Mediates the nuclear export of encapsidated genomic RNAs (ribonucleoproteins, RNPs). Acts as an adapter between viral RNPs complexes and the nuclear export machinery of the cell. Possesses no intrinsic RNA-binding activity, but includes a C-terminal M1-binding domain. This domain is believed to allow recognition of RNPs bound to the protein M1. Since protein M1 is not available in large quantities before late stages of infection, such an indirect recognition mechanism probably ensures that genomic RNPs are not exported from the host nucleus until sufficient quantities of viral mRNA and progeny genomic RNA have been synthesized. Furthermore, the RNPs enter the host cytoplasm only when associated with the M1 protein that is necessary to guide them to the plasma membrane. May down-regulate viral RNA synthesis when overproduced.</text>
</comment>
<comment type="subunit">
    <text evidence="1">Interacts with protein M1. May interact with host nucleoporin RAB/HRB and exportin XPO1/CRM1.</text>
</comment>
<comment type="subcellular location">
    <subcellularLocation>
        <location evidence="1">Virion</location>
    </subcellularLocation>
    <subcellularLocation>
        <location evidence="1">Host nucleus</location>
    </subcellularLocation>
</comment>
<comment type="alternative products">
    <event type="alternative splicing"/>
    <isoform>
        <id>P69257-1</id>
        <name>NEP</name>
        <name>NS2</name>
        <sequence type="displayed"/>
    </isoform>
    <isoform>
        <id>P03494-1</id>
        <name>NS1</name>
        <sequence type="external"/>
    </isoform>
</comment>
<comment type="miscellaneous">
    <text>Average number present in a viral particle is estimated to be 130-200 molecules.</text>
</comment>
<comment type="similarity">
    <text evidence="1">Belongs to the influenza viruses NEP family.</text>
</comment>
<evidence type="ECO:0000255" key="1">
    <source>
        <dbReference type="HAMAP-Rule" id="MF_04067"/>
    </source>
</evidence>
<feature type="chain" id="PRO_0000078974" description="Nuclear export protein">
    <location>
        <begin position="1"/>
        <end position="121"/>
    </location>
</feature>
<feature type="short sequence motif" description="Nuclear export signal" evidence="1">
    <location>
        <begin position="12"/>
        <end position="21"/>
    </location>
</feature>
<feature type="short sequence motif" description="Nuclear export signal" evidence="1">
    <location>
        <begin position="85"/>
        <end position="94"/>
    </location>
</feature>
<keyword id="KW-0025">Alternative splicing</keyword>
<keyword id="KW-1048">Host nucleus</keyword>
<keyword id="KW-0945">Host-virus interaction</keyword>
<keyword id="KW-0813">Transport</keyword>
<keyword id="KW-0946">Virion</keyword>
<proteinExistence type="inferred from homology"/>
<organismHost>
    <name type="scientific">Aves</name>
    <dbReference type="NCBI Taxonomy" id="8782"/>
</organismHost>
<organismHost>
    <name type="scientific">Cetacea</name>
    <name type="common">whales</name>
    <dbReference type="NCBI Taxonomy" id="9721"/>
</organismHost>
<organismHost>
    <name type="scientific">Homo sapiens</name>
    <name type="common">Human</name>
    <dbReference type="NCBI Taxonomy" id="9606"/>
</organismHost>
<organismHost>
    <name type="scientific">Phocidae</name>
    <name type="common">true seals</name>
    <dbReference type="NCBI Taxonomy" id="9709"/>
</organismHost>
<organismHost>
    <name type="scientific">Sus scrofa</name>
    <name type="common">Pig</name>
    <dbReference type="NCBI Taxonomy" id="9823"/>
</organismHost>
<gene>
    <name evidence="1" type="primary">NS</name>
</gene>
<name>NEP_I77A0</name>
<dbReference type="EMBL" id="K01332">
    <property type="protein sequence ID" value="AAA43514.1"/>
    <property type="molecule type" value="Genomic_RNA"/>
</dbReference>
<dbReference type="PIR" id="A04094">
    <property type="entry name" value="MNIV2K"/>
</dbReference>
<dbReference type="SMR" id="P69257"/>
<dbReference type="GO" id="GO:0042025">
    <property type="term" value="C:host cell nucleus"/>
    <property type="evidence" value="ECO:0007669"/>
    <property type="project" value="UniProtKB-SubCell"/>
</dbReference>
<dbReference type="GO" id="GO:0044423">
    <property type="term" value="C:virion component"/>
    <property type="evidence" value="ECO:0007669"/>
    <property type="project" value="UniProtKB-UniRule"/>
</dbReference>
<dbReference type="GO" id="GO:0039675">
    <property type="term" value="P:exit of virus from host cell nucleus through nuclear pore"/>
    <property type="evidence" value="ECO:0007669"/>
    <property type="project" value="UniProtKB-UniRule"/>
</dbReference>
<dbReference type="Gene3D" id="1.10.287.230">
    <property type="match status" value="1"/>
</dbReference>
<dbReference type="Gene3D" id="1.10.287.10">
    <property type="entry name" value="S15/NS1, RNA-binding"/>
    <property type="match status" value="1"/>
</dbReference>
<dbReference type="HAMAP" id="MF_04067">
    <property type="entry name" value="INFV_NEP"/>
    <property type="match status" value="1"/>
</dbReference>
<dbReference type="InterPro" id="IPR000968">
    <property type="entry name" value="Flu_NS2"/>
</dbReference>
<dbReference type="Pfam" id="PF00601">
    <property type="entry name" value="Flu_NS2"/>
    <property type="match status" value="1"/>
</dbReference>
<dbReference type="SUPFAM" id="SSF101156">
    <property type="entry name" value="Nonstructural protein ns2, Nep, M1-binding domain"/>
    <property type="match status" value="1"/>
</dbReference>
<organism>
    <name type="scientific">Influenza A virus (strain A/Alaska/6/1977 H3N2)</name>
    <dbReference type="NCBI Taxonomy" id="385576"/>
    <lineage>
        <taxon>Viruses</taxon>
        <taxon>Riboviria</taxon>
        <taxon>Orthornavirae</taxon>
        <taxon>Negarnaviricota</taxon>
        <taxon>Polyploviricotina</taxon>
        <taxon>Insthoviricetes</taxon>
        <taxon>Articulavirales</taxon>
        <taxon>Orthomyxoviridae</taxon>
        <taxon>Alphainfluenzavirus</taxon>
        <taxon>Alphainfluenzavirus influenzae</taxon>
        <taxon>Influenza A virus</taxon>
    </lineage>
</organism>
<sequence>MDSNTVSSFQDILLRMSKMQLGSSSEDLNGMITQFESLKLYRDSLGEAVMRMGDLHLLQNRNGKWREQLGQKFEEIRWLIEEVRHRLKTTENSFEQITFMQALQLLFEVEQEIRTFSFQLI</sequence>
<accession>P69257</accession>
<accession>P03503</accession>
<accession>P03507</accession>